<evidence type="ECO:0000250" key="1"/>
<evidence type="ECO:0000250" key="2">
    <source>
        <dbReference type="UniProtKB" id="Q86WW8"/>
    </source>
</evidence>
<evidence type="ECO:0000255" key="3">
    <source>
        <dbReference type="PROSITE-ProRule" id="PRU01150"/>
    </source>
</evidence>
<evidence type="ECO:0000305" key="4"/>
<feature type="chain" id="PRO_0000325875" description="Cytochrome c oxidase assembly factor 5">
    <location>
        <begin position="1"/>
        <end position="74"/>
    </location>
</feature>
<feature type="domain" description="CHCH" evidence="3">
    <location>
        <begin position="27"/>
        <end position="65"/>
    </location>
</feature>
<feature type="short sequence motif" description="Cx10C motif" evidence="3">
    <location>
        <begin position="30"/>
        <end position="41"/>
    </location>
</feature>
<feature type="short sequence motif" description="Cx9C motif" evidence="3">
    <location>
        <begin position="47"/>
        <end position="57"/>
    </location>
</feature>
<feature type="modified residue" description="Phosphoserine" evidence="2">
    <location>
        <position position="37"/>
    </location>
</feature>
<feature type="disulfide bond" evidence="3">
    <location>
        <begin position="30"/>
        <end position="57"/>
    </location>
</feature>
<feature type="disulfide bond" evidence="3">
    <location>
        <begin position="41"/>
        <end position="47"/>
    </location>
</feature>
<comment type="function">
    <text evidence="1">Involved in an early step of the mitochondrial complex IV assembly process.</text>
</comment>
<comment type="similarity">
    <text evidence="4">Belongs to the PET191 family.</text>
</comment>
<accession>Q3ZCK8</accession>
<sequence length="74" mass="8417">MPRYYEDKPEGGACAGVKEDLGLCLLQSDCVLKEGKSPRQCLKEGNCKALKYSFFECKRSMLDARSRFRGRKGY</sequence>
<reference key="1">
    <citation type="submission" date="2005-08" db="EMBL/GenBank/DDBJ databases">
        <authorList>
            <consortium name="NIH - Mammalian Gene Collection (MGC) project"/>
        </authorList>
    </citation>
    <scope>NUCLEOTIDE SEQUENCE [LARGE SCALE MRNA]</scope>
    <source>
        <strain>Crossbred X Angus</strain>
        <tissue>Ileum</tissue>
    </source>
</reference>
<protein>
    <recommendedName>
        <fullName>Cytochrome c oxidase assembly factor 5</fullName>
    </recommendedName>
</protein>
<dbReference type="EMBL" id="BC102104">
    <property type="protein sequence ID" value="AAI02105.1"/>
    <property type="molecule type" value="mRNA"/>
</dbReference>
<dbReference type="RefSeq" id="NP_001181953.1">
    <property type="nucleotide sequence ID" value="NM_001195024.2"/>
</dbReference>
<dbReference type="SMR" id="Q3ZCK8"/>
<dbReference type="FunCoup" id="Q3ZCK8">
    <property type="interactions" value="1074"/>
</dbReference>
<dbReference type="STRING" id="9913.ENSBTAP00000019802"/>
<dbReference type="PaxDb" id="9913-ENSBTAP00000019802"/>
<dbReference type="GeneID" id="614794"/>
<dbReference type="KEGG" id="bta:614794"/>
<dbReference type="CTD" id="493753"/>
<dbReference type="VEuPathDB" id="HostDB:ENSBTAG00000014873"/>
<dbReference type="eggNOG" id="KOG4114">
    <property type="taxonomic scope" value="Eukaryota"/>
</dbReference>
<dbReference type="HOGENOM" id="CLU_138069_2_2_1"/>
<dbReference type="InParanoid" id="Q3ZCK8"/>
<dbReference type="OMA" id="KKTPKEC"/>
<dbReference type="OrthoDB" id="282149at2759"/>
<dbReference type="TreeFam" id="TF313953"/>
<dbReference type="Reactome" id="R-BTA-9864848">
    <property type="pathway name" value="Complex IV assembly"/>
</dbReference>
<dbReference type="Proteomes" id="UP000009136">
    <property type="component" value="Chromosome 11"/>
</dbReference>
<dbReference type="Bgee" id="ENSBTAG00000014873">
    <property type="expression patterns" value="Expressed in tongue muscle and 105 other cell types or tissues"/>
</dbReference>
<dbReference type="GO" id="GO:0005739">
    <property type="term" value="C:mitochondrion"/>
    <property type="evidence" value="ECO:0000318"/>
    <property type="project" value="GO_Central"/>
</dbReference>
<dbReference type="GO" id="GO:0002521">
    <property type="term" value="P:leukocyte differentiation"/>
    <property type="evidence" value="ECO:0007669"/>
    <property type="project" value="Ensembl"/>
</dbReference>
<dbReference type="GO" id="GO:0033617">
    <property type="term" value="P:mitochondrial cytochrome c oxidase assembly"/>
    <property type="evidence" value="ECO:0000318"/>
    <property type="project" value="GO_Central"/>
</dbReference>
<dbReference type="GO" id="GO:0035264">
    <property type="term" value="P:multicellular organism growth"/>
    <property type="evidence" value="ECO:0007669"/>
    <property type="project" value="Ensembl"/>
</dbReference>
<dbReference type="GO" id="GO:0048536">
    <property type="term" value="P:spleen development"/>
    <property type="evidence" value="ECO:0007669"/>
    <property type="project" value="Ensembl"/>
</dbReference>
<dbReference type="GO" id="GO:0048538">
    <property type="term" value="P:thymus development"/>
    <property type="evidence" value="ECO:0007669"/>
    <property type="project" value="Ensembl"/>
</dbReference>
<dbReference type="InterPro" id="IPR018793">
    <property type="entry name" value="Cyt_c_oxidase_assmbl_Pet191"/>
</dbReference>
<dbReference type="PANTHER" id="PTHR28627">
    <property type="entry name" value="CYTOCHROME C OXIDASE ASSEMBLY FACTOR 5"/>
    <property type="match status" value="1"/>
</dbReference>
<dbReference type="PANTHER" id="PTHR28627:SF1">
    <property type="entry name" value="CYTOCHROME C OXIDASE ASSEMBLY FACTOR 5"/>
    <property type="match status" value="1"/>
</dbReference>
<dbReference type="Pfam" id="PF10203">
    <property type="entry name" value="Pet191_N"/>
    <property type="match status" value="1"/>
</dbReference>
<dbReference type="PROSITE" id="PS51808">
    <property type="entry name" value="CHCH"/>
    <property type="match status" value="1"/>
</dbReference>
<proteinExistence type="inferred from homology"/>
<keyword id="KW-1015">Disulfide bond</keyword>
<keyword id="KW-0597">Phosphoprotein</keyword>
<keyword id="KW-1185">Reference proteome</keyword>
<name>COA5_BOVIN</name>
<gene>
    <name type="primary">COA5</name>
</gene>
<organism>
    <name type="scientific">Bos taurus</name>
    <name type="common">Bovine</name>
    <dbReference type="NCBI Taxonomy" id="9913"/>
    <lineage>
        <taxon>Eukaryota</taxon>
        <taxon>Metazoa</taxon>
        <taxon>Chordata</taxon>
        <taxon>Craniata</taxon>
        <taxon>Vertebrata</taxon>
        <taxon>Euteleostomi</taxon>
        <taxon>Mammalia</taxon>
        <taxon>Eutheria</taxon>
        <taxon>Laurasiatheria</taxon>
        <taxon>Artiodactyla</taxon>
        <taxon>Ruminantia</taxon>
        <taxon>Pecora</taxon>
        <taxon>Bovidae</taxon>
        <taxon>Bovinae</taxon>
        <taxon>Bos</taxon>
    </lineage>
</organism>